<protein>
    <recommendedName>
        <fullName evidence="1">Putative competence-damage inducible protein</fullName>
    </recommendedName>
</protein>
<gene>
    <name evidence="1" type="primary">cinA</name>
    <name type="ordered locus">SPD_1740</name>
</gene>
<comment type="similarity">
    <text evidence="1">Belongs to the CinA family.</text>
</comment>
<feature type="chain" id="PRO_1000058730" description="Putative competence-damage inducible protein">
    <location>
        <begin position="1"/>
        <end position="418"/>
    </location>
</feature>
<keyword id="KW-1185">Reference proteome</keyword>
<sequence>MKAEIIAVGTEILTGQIVNTNAQFLSEKLAEIGVDVYFQTAVGDNEVRLLSLLEIASQRSSLVILTGGLGATEDDLTKQTLAKFLGKALVFDPQAQEKLDIFFALRPDYARTPNNERQVQIVEGAIPLPNETGLAVGGKLEVDGVTYVVLPGPPSELKPMVLNQLLPKLMTGSKLYSRVLRFFGIGESQLVTILADLIDNQIDPTLAPYAKTGEVTLRLSTKASSQEEANQALDILENQILDCQTFEGISLRDFCYGYGEETSLASIVVEELKRQGKTIAAAESLTAGLFQATVANFSGVSSIFEGGFVTYSLEEKSRMLDIPAKNLEEHGVVSEFTAQKMAEQARSKTQSDFGISLTGVAGPDSLEGHPVGTVFIGLAQDQGTEVIKVNIGGRSRADVRHIAVMHAFNLVRKALLSD</sequence>
<evidence type="ECO:0000255" key="1">
    <source>
        <dbReference type="HAMAP-Rule" id="MF_00226"/>
    </source>
</evidence>
<dbReference type="EMBL" id="CP000410">
    <property type="protein sequence ID" value="ABJ54079.1"/>
    <property type="molecule type" value="Genomic_DNA"/>
</dbReference>
<dbReference type="RefSeq" id="WP_000642701.1">
    <property type="nucleotide sequence ID" value="NC_008533.2"/>
</dbReference>
<dbReference type="SMR" id="Q04IM5"/>
<dbReference type="PaxDb" id="373153-SPD_1740"/>
<dbReference type="KEGG" id="spd:SPD_1740"/>
<dbReference type="eggNOG" id="COG1058">
    <property type="taxonomic scope" value="Bacteria"/>
</dbReference>
<dbReference type="eggNOG" id="COG1546">
    <property type="taxonomic scope" value="Bacteria"/>
</dbReference>
<dbReference type="HOGENOM" id="CLU_030805_9_3_9"/>
<dbReference type="BioCyc" id="SPNE373153:G1G6V-1882-MONOMER"/>
<dbReference type="Proteomes" id="UP000001452">
    <property type="component" value="Chromosome"/>
</dbReference>
<dbReference type="CDD" id="cd00885">
    <property type="entry name" value="cinA"/>
    <property type="match status" value="1"/>
</dbReference>
<dbReference type="Gene3D" id="3.30.70.2860">
    <property type="match status" value="1"/>
</dbReference>
<dbReference type="Gene3D" id="3.90.950.20">
    <property type="entry name" value="CinA-like"/>
    <property type="match status" value="1"/>
</dbReference>
<dbReference type="Gene3D" id="3.40.980.10">
    <property type="entry name" value="MoaB/Mog-like domain"/>
    <property type="match status" value="1"/>
</dbReference>
<dbReference type="HAMAP" id="MF_00226_B">
    <property type="entry name" value="CinA_B"/>
    <property type="match status" value="1"/>
</dbReference>
<dbReference type="InterPro" id="IPR050101">
    <property type="entry name" value="CinA"/>
</dbReference>
<dbReference type="InterPro" id="IPR036653">
    <property type="entry name" value="CinA-like_C"/>
</dbReference>
<dbReference type="InterPro" id="IPR008136">
    <property type="entry name" value="CinA_C"/>
</dbReference>
<dbReference type="InterPro" id="IPR041424">
    <property type="entry name" value="CinA_KH"/>
</dbReference>
<dbReference type="InterPro" id="IPR008135">
    <property type="entry name" value="Competence-induced_CinA"/>
</dbReference>
<dbReference type="InterPro" id="IPR036425">
    <property type="entry name" value="MoaB/Mog-like_dom_sf"/>
</dbReference>
<dbReference type="InterPro" id="IPR001453">
    <property type="entry name" value="MoaB/Mog_dom"/>
</dbReference>
<dbReference type="NCBIfam" id="TIGR00200">
    <property type="entry name" value="cinA_nterm"/>
    <property type="match status" value="1"/>
</dbReference>
<dbReference type="NCBIfam" id="TIGR00199">
    <property type="entry name" value="PncC_domain"/>
    <property type="match status" value="1"/>
</dbReference>
<dbReference type="NCBIfam" id="NF001813">
    <property type="entry name" value="PRK00549.1"/>
    <property type="match status" value="1"/>
</dbReference>
<dbReference type="PANTHER" id="PTHR13939">
    <property type="entry name" value="NICOTINAMIDE-NUCLEOTIDE AMIDOHYDROLASE PNCC"/>
    <property type="match status" value="1"/>
</dbReference>
<dbReference type="PANTHER" id="PTHR13939:SF0">
    <property type="entry name" value="NMN AMIDOHYDROLASE-LIKE PROTEIN YFAY"/>
    <property type="match status" value="1"/>
</dbReference>
<dbReference type="Pfam" id="PF02464">
    <property type="entry name" value="CinA"/>
    <property type="match status" value="1"/>
</dbReference>
<dbReference type="Pfam" id="PF18146">
    <property type="entry name" value="CinA_KH"/>
    <property type="match status" value="1"/>
</dbReference>
<dbReference type="Pfam" id="PF00994">
    <property type="entry name" value="MoCF_biosynth"/>
    <property type="match status" value="1"/>
</dbReference>
<dbReference type="PIRSF" id="PIRSF006728">
    <property type="entry name" value="CinA"/>
    <property type="match status" value="1"/>
</dbReference>
<dbReference type="SMART" id="SM00852">
    <property type="entry name" value="MoCF_biosynth"/>
    <property type="match status" value="1"/>
</dbReference>
<dbReference type="SUPFAM" id="SSF142433">
    <property type="entry name" value="CinA-like"/>
    <property type="match status" value="1"/>
</dbReference>
<dbReference type="SUPFAM" id="SSF53218">
    <property type="entry name" value="Molybdenum cofactor biosynthesis proteins"/>
    <property type="match status" value="1"/>
</dbReference>
<accession>Q04IM5</accession>
<organism>
    <name type="scientific">Streptococcus pneumoniae serotype 2 (strain D39 / NCTC 7466)</name>
    <dbReference type="NCBI Taxonomy" id="373153"/>
    <lineage>
        <taxon>Bacteria</taxon>
        <taxon>Bacillati</taxon>
        <taxon>Bacillota</taxon>
        <taxon>Bacilli</taxon>
        <taxon>Lactobacillales</taxon>
        <taxon>Streptococcaceae</taxon>
        <taxon>Streptococcus</taxon>
    </lineage>
</organism>
<proteinExistence type="inferred from homology"/>
<reference key="1">
    <citation type="journal article" date="2007" name="J. Bacteriol.">
        <title>Genome sequence of Avery's virulent serotype 2 strain D39 of Streptococcus pneumoniae and comparison with that of unencapsulated laboratory strain R6.</title>
        <authorList>
            <person name="Lanie J.A."/>
            <person name="Ng W.-L."/>
            <person name="Kazmierczak K.M."/>
            <person name="Andrzejewski T.M."/>
            <person name="Davidsen T.M."/>
            <person name="Wayne K.J."/>
            <person name="Tettelin H."/>
            <person name="Glass J.I."/>
            <person name="Winkler M.E."/>
        </authorList>
    </citation>
    <scope>NUCLEOTIDE SEQUENCE [LARGE SCALE GENOMIC DNA]</scope>
    <source>
        <strain>D39 / NCTC 7466</strain>
    </source>
</reference>
<name>CINA_STRP2</name>